<keyword id="KW-0067">ATP-binding</keyword>
<keyword id="KW-0436">Ligase</keyword>
<keyword id="KW-0547">Nucleotide-binding</keyword>
<keyword id="KW-0648">Protein biosynthesis</keyword>
<keyword id="KW-1185">Reference proteome</keyword>
<proteinExistence type="inferred from homology"/>
<gene>
    <name evidence="1" type="primary">gatA</name>
    <name type="ordered locus">Mfla_2489</name>
</gene>
<evidence type="ECO:0000255" key="1">
    <source>
        <dbReference type="HAMAP-Rule" id="MF_00120"/>
    </source>
</evidence>
<reference key="1">
    <citation type="submission" date="2006-03" db="EMBL/GenBank/DDBJ databases">
        <title>Complete sequence of Methylobacillus flagellatus KT.</title>
        <authorList>
            <consortium name="US DOE Joint Genome Institute"/>
            <person name="Copeland A."/>
            <person name="Lucas S."/>
            <person name="Lapidus A."/>
            <person name="Barry K."/>
            <person name="Detter J.C."/>
            <person name="Glavina del Rio T."/>
            <person name="Hammon N."/>
            <person name="Israni S."/>
            <person name="Dalin E."/>
            <person name="Tice H."/>
            <person name="Pitluck S."/>
            <person name="Brettin T."/>
            <person name="Bruce D."/>
            <person name="Han C."/>
            <person name="Tapia R."/>
            <person name="Saunders E."/>
            <person name="Gilna P."/>
            <person name="Schmutz J."/>
            <person name="Larimer F."/>
            <person name="Land M."/>
            <person name="Kyrpides N."/>
            <person name="Anderson I."/>
            <person name="Richardson P."/>
        </authorList>
    </citation>
    <scope>NUCLEOTIDE SEQUENCE [LARGE SCALE GENOMIC DNA]</scope>
    <source>
        <strain>ATCC 51484 / DSM 6875 / VKM B-1610 / KT</strain>
    </source>
</reference>
<organism>
    <name type="scientific">Methylobacillus flagellatus (strain ATCC 51484 / DSM 6875 / VKM B-1610 / KT)</name>
    <dbReference type="NCBI Taxonomy" id="265072"/>
    <lineage>
        <taxon>Bacteria</taxon>
        <taxon>Pseudomonadati</taxon>
        <taxon>Pseudomonadota</taxon>
        <taxon>Betaproteobacteria</taxon>
        <taxon>Nitrosomonadales</taxon>
        <taxon>Methylophilaceae</taxon>
        <taxon>Methylobacillus</taxon>
    </lineage>
</organism>
<dbReference type="EC" id="6.3.5.7" evidence="1"/>
<dbReference type="EMBL" id="CP000284">
    <property type="protein sequence ID" value="ABE50754.1"/>
    <property type="molecule type" value="Genomic_DNA"/>
</dbReference>
<dbReference type="RefSeq" id="WP_011480707.1">
    <property type="nucleotide sequence ID" value="NC_007947.1"/>
</dbReference>
<dbReference type="SMR" id="Q1GYD3"/>
<dbReference type="STRING" id="265072.Mfla_2489"/>
<dbReference type="KEGG" id="mfa:Mfla_2489"/>
<dbReference type="eggNOG" id="COG0154">
    <property type="taxonomic scope" value="Bacteria"/>
</dbReference>
<dbReference type="HOGENOM" id="CLU_009600_0_3_4"/>
<dbReference type="OrthoDB" id="9811471at2"/>
<dbReference type="Proteomes" id="UP000002440">
    <property type="component" value="Chromosome"/>
</dbReference>
<dbReference type="GO" id="GO:0030956">
    <property type="term" value="C:glutamyl-tRNA(Gln) amidotransferase complex"/>
    <property type="evidence" value="ECO:0007669"/>
    <property type="project" value="InterPro"/>
</dbReference>
<dbReference type="GO" id="GO:0005524">
    <property type="term" value="F:ATP binding"/>
    <property type="evidence" value="ECO:0007669"/>
    <property type="project" value="UniProtKB-KW"/>
</dbReference>
<dbReference type="GO" id="GO:0050567">
    <property type="term" value="F:glutaminyl-tRNA synthase (glutamine-hydrolyzing) activity"/>
    <property type="evidence" value="ECO:0007669"/>
    <property type="project" value="UniProtKB-UniRule"/>
</dbReference>
<dbReference type="GO" id="GO:0006412">
    <property type="term" value="P:translation"/>
    <property type="evidence" value="ECO:0007669"/>
    <property type="project" value="UniProtKB-UniRule"/>
</dbReference>
<dbReference type="Gene3D" id="3.90.1300.10">
    <property type="entry name" value="Amidase signature (AS) domain"/>
    <property type="match status" value="1"/>
</dbReference>
<dbReference type="HAMAP" id="MF_00120">
    <property type="entry name" value="GatA"/>
    <property type="match status" value="1"/>
</dbReference>
<dbReference type="InterPro" id="IPR000120">
    <property type="entry name" value="Amidase"/>
</dbReference>
<dbReference type="InterPro" id="IPR020556">
    <property type="entry name" value="Amidase_CS"/>
</dbReference>
<dbReference type="InterPro" id="IPR023631">
    <property type="entry name" value="Amidase_dom"/>
</dbReference>
<dbReference type="InterPro" id="IPR036928">
    <property type="entry name" value="AS_sf"/>
</dbReference>
<dbReference type="InterPro" id="IPR004412">
    <property type="entry name" value="GatA"/>
</dbReference>
<dbReference type="NCBIfam" id="TIGR00132">
    <property type="entry name" value="gatA"/>
    <property type="match status" value="1"/>
</dbReference>
<dbReference type="PANTHER" id="PTHR11895:SF151">
    <property type="entry name" value="GLUTAMYL-TRNA(GLN) AMIDOTRANSFERASE SUBUNIT A"/>
    <property type="match status" value="1"/>
</dbReference>
<dbReference type="PANTHER" id="PTHR11895">
    <property type="entry name" value="TRANSAMIDASE"/>
    <property type="match status" value="1"/>
</dbReference>
<dbReference type="Pfam" id="PF01425">
    <property type="entry name" value="Amidase"/>
    <property type="match status" value="1"/>
</dbReference>
<dbReference type="SUPFAM" id="SSF75304">
    <property type="entry name" value="Amidase signature (AS) enzymes"/>
    <property type="match status" value="1"/>
</dbReference>
<dbReference type="PROSITE" id="PS00571">
    <property type="entry name" value="AMIDASES"/>
    <property type="match status" value="1"/>
</dbReference>
<sequence length="490" mass="52824">MINHSLKQLADMLASKEISSVELTQEYLNRIAQLNPEINAYITVNPELSLAQAQAADQRIANGDAGPLTGIPIAQKDIFCAKGWRTTCGSRMLENFIAPYDAGIIERFNAAGAVNLGKTNMDEFAMGSSNETSYFGKVQNPWDRSRVPGGSSGGSAAAVAARLCAAATGTDTGGSIRQPASLCGLSGLKPTYGLASRYGMIAFASSLDQAGPMAHSAEDMALMMNVMTGFDERDSTSLQREKEDYTRELGKSLAGIRIGLPKEYFAEGLDAGVAKVIEAAVDEYRKLGAEIVEVTLPNTMLSIPVYYVLAPAEASSNLSRYDGVRFGHRAAEYDDLMDMYCKSRAEGFGEEVKRRILIGTYVLSAGYYDAYYLKAQQIRRLIAEDFAKAFEQCDLILGPTAPSTAFKSGEKADDPVSMYLQDIYTIAVNLAGLPGMSIPAGFAPAADGVELPVGLQIIGNYFDEARMLNAGHVYQQVTDWHTRMPEGIAS</sequence>
<feature type="chain" id="PRO_1000015860" description="Glutamyl-tRNA(Gln) amidotransferase subunit A">
    <location>
        <begin position="1"/>
        <end position="490"/>
    </location>
</feature>
<feature type="active site" description="Charge relay system" evidence="1">
    <location>
        <position position="76"/>
    </location>
</feature>
<feature type="active site" description="Charge relay system" evidence="1">
    <location>
        <position position="151"/>
    </location>
</feature>
<feature type="active site" description="Acyl-ester intermediate" evidence="1">
    <location>
        <position position="175"/>
    </location>
</feature>
<accession>Q1GYD3</accession>
<protein>
    <recommendedName>
        <fullName evidence="1">Glutamyl-tRNA(Gln) amidotransferase subunit A</fullName>
        <shortName evidence="1">Glu-ADT subunit A</shortName>
        <ecNumber evidence="1">6.3.5.7</ecNumber>
    </recommendedName>
</protein>
<name>GATA_METFK</name>
<comment type="function">
    <text evidence="1">Allows the formation of correctly charged Gln-tRNA(Gln) through the transamidation of misacylated Glu-tRNA(Gln) in organisms which lack glutaminyl-tRNA synthetase. The reaction takes place in the presence of glutamine and ATP through an activated gamma-phospho-Glu-tRNA(Gln).</text>
</comment>
<comment type="catalytic activity">
    <reaction evidence="1">
        <text>L-glutamyl-tRNA(Gln) + L-glutamine + ATP + H2O = L-glutaminyl-tRNA(Gln) + L-glutamate + ADP + phosphate + H(+)</text>
        <dbReference type="Rhea" id="RHEA:17521"/>
        <dbReference type="Rhea" id="RHEA-COMP:9681"/>
        <dbReference type="Rhea" id="RHEA-COMP:9684"/>
        <dbReference type="ChEBI" id="CHEBI:15377"/>
        <dbReference type="ChEBI" id="CHEBI:15378"/>
        <dbReference type="ChEBI" id="CHEBI:29985"/>
        <dbReference type="ChEBI" id="CHEBI:30616"/>
        <dbReference type="ChEBI" id="CHEBI:43474"/>
        <dbReference type="ChEBI" id="CHEBI:58359"/>
        <dbReference type="ChEBI" id="CHEBI:78520"/>
        <dbReference type="ChEBI" id="CHEBI:78521"/>
        <dbReference type="ChEBI" id="CHEBI:456216"/>
        <dbReference type="EC" id="6.3.5.7"/>
    </reaction>
</comment>
<comment type="subunit">
    <text evidence="1">Heterotrimer of A, B and C subunits.</text>
</comment>
<comment type="similarity">
    <text evidence="1">Belongs to the amidase family. GatA subfamily.</text>
</comment>